<gene>
    <name type="primary">CMC4</name>
    <name type="ordered locus">YALI0E24409g</name>
</gene>
<feature type="chain" id="PRO_0000408577" description="Cx9C motif-containing protein 4, mitochondrial">
    <location>
        <begin position="1"/>
        <end position="89"/>
    </location>
</feature>
<feature type="domain" description="CHCH" evidence="2">
    <location>
        <begin position="10"/>
        <end position="52"/>
    </location>
</feature>
<feature type="short sequence motif" description="Cx9C motif 1" evidence="2">
    <location>
        <begin position="13"/>
        <end position="23"/>
    </location>
</feature>
<feature type="short sequence motif" description="Cx9C motif 2" evidence="2">
    <location>
        <begin position="34"/>
        <end position="44"/>
    </location>
</feature>
<feature type="disulfide bond" evidence="2">
    <location>
        <begin position="13"/>
        <end position="44"/>
    </location>
</feature>
<feature type="disulfide bond" evidence="2">
    <location>
        <begin position="23"/>
        <end position="34"/>
    </location>
</feature>
<sequence length="89" mass="10263">MAEEEIDYNSQPCHAYACRIQDCLQRSGYNESKCTKLIDELYECCAKFYMSKGEDARSTSCPKPNLLKLKIQQRESKDVDAVLLEFAKK</sequence>
<keyword id="KW-1015">Disulfide bond</keyword>
<keyword id="KW-0496">Mitochondrion</keyword>
<keyword id="KW-1185">Reference proteome</keyword>
<keyword id="KW-0677">Repeat</keyword>
<reference key="1">
    <citation type="journal article" date="2004" name="Nature">
        <title>Genome evolution in yeasts.</title>
        <authorList>
            <person name="Dujon B."/>
            <person name="Sherman D."/>
            <person name="Fischer G."/>
            <person name="Durrens P."/>
            <person name="Casaregola S."/>
            <person name="Lafontaine I."/>
            <person name="de Montigny J."/>
            <person name="Marck C."/>
            <person name="Neuveglise C."/>
            <person name="Talla E."/>
            <person name="Goffard N."/>
            <person name="Frangeul L."/>
            <person name="Aigle M."/>
            <person name="Anthouard V."/>
            <person name="Babour A."/>
            <person name="Barbe V."/>
            <person name="Barnay S."/>
            <person name="Blanchin S."/>
            <person name="Beckerich J.-M."/>
            <person name="Beyne E."/>
            <person name="Bleykasten C."/>
            <person name="Boisrame A."/>
            <person name="Boyer J."/>
            <person name="Cattolico L."/>
            <person name="Confanioleri F."/>
            <person name="de Daruvar A."/>
            <person name="Despons L."/>
            <person name="Fabre E."/>
            <person name="Fairhead C."/>
            <person name="Ferry-Dumazet H."/>
            <person name="Groppi A."/>
            <person name="Hantraye F."/>
            <person name="Hennequin C."/>
            <person name="Jauniaux N."/>
            <person name="Joyet P."/>
            <person name="Kachouri R."/>
            <person name="Kerrest A."/>
            <person name="Koszul R."/>
            <person name="Lemaire M."/>
            <person name="Lesur I."/>
            <person name="Ma L."/>
            <person name="Muller H."/>
            <person name="Nicaud J.-M."/>
            <person name="Nikolski M."/>
            <person name="Oztas S."/>
            <person name="Ozier-Kalogeropoulos O."/>
            <person name="Pellenz S."/>
            <person name="Potier S."/>
            <person name="Richard G.-F."/>
            <person name="Straub M.-L."/>
            <person name="Suleau A."/>
            <person name="Swennen D."/>
            <person name="Tekaia F."/>
            <person name="Wesolowski-Louvel M."/>
            <person name="Westhof E."/>
            <person name="Wirth B."/>
            <person name="Zeniou-Meyer M."/>
            <person name="Zivanovic Y."/>
            <person name="Bolotin-Fukuhara M."/>
            <person name="Thierry A."/>
            <person name="Bouchier C."/>
            <person name="Caudron B."/>
            <person name="Scarpelli C."/>
            <person name="Gaillardin C."/>
            <person name="Weissenbach J."/>
            <person name="Wincker P."/>
            <person name="Souciet J.-L."/>
        </authorList>
    </citation>
    <scope>NUCLEOTIDE SEQUENCE [LARGE SCALE GENOMIC DNA]</scope>
    <source>
        <strain>CLIB 122 / E 150</strain>
    </source>
</reference>
<proteinExistence type="inferred from homology"/>
<protein>
    <recommendedName>
        <fullName>Cx9C motif-containing protein 4, mitochondrial</fullName>
    </recommendedName>
</protein>
<organism>
    <name type="scientific">Yarrowia lipolytica (strain CLIB 122 / E 150)</name>
    <name type="common">Yeast</name>
    <name type="synonym">Candida lipolytica</name>
    <dbReference type="NCBI Taxonomy" id="284591"/>
    <lineage>
        <taxon>Eukaryota</taxon>
        <taxon>Fungi</taxon>
        <taxon>Dikarya</taxon>
        <taxon>Ascomycota</taxon>
        <taxon>Saccharomycotina</taxon>
        <taxon>Dipodascomycetes</taxon>
        <taxon>Dipodascales</taxon>
        <taxon>Dipodascales incertae sedis</taxon>
        <taxon>Yarrowia</taxon>
    </lineage>
</organism>
<comment type="subcellular location">
    <subcellularLocation>
        <location evidence="1">Mitochondrion intermembrane space</location>
    </subcellularLocation>
    <text evidence="1">Imported into the mitochondria via the mitochondrial disulfide relay system.</text>
</comment>
<comment type="domain">
    <text evidence="1">The twin Cx9C motifs are involved in the recognition by the mitochondrial disulfide relay system.</text>
</comment>
<comment type="similarity">
    <text evidence="3">Belongs to the CMC4 family.</text>
</comment>
<dbReference type="EMBL" id="CR382131">
    <property type="protein sequence ID" value="CAG79950.2"/>
    <property type="molecule type" value="Genomic_DNA"/>
</dbReference>
<dbReference type="RefSeq" id="XP_504351.2">
    <property type="nucleotide sequence ID" value="XM_504351.2"/>
</dbReference>
<dbReference type="SMR" id="Q6C4R1"/>
<dbReference type="FunCoup" id="Q6C4R1">
    <property type="interactions" value="96"/>
</dbReference>
<dbReference type="STRING" id="284591.Q6C4R1"/>
<dbReference type="EnsemblFungi" id="CAG79950">
    <property type="protein sequence ID" value="CAG79950"/>
    <property type="gene ID" value="YALI0_E24409g"/>
</dbReference>
<dbReference type="KEGG" id="yli:2912545"/>
<dbReference type="VEuPathDB" id="FungiDB:YALI0_E24409g"/>
<dbReference type="HOGENOM" id="CLU_177210_0_1_1"/>
<dbReference type="InParanoid" id="Q6C4R1"/>
<dbReference type="OMA" id="YQEEKCQ"/>
<dbReference type="OrthoDB" id="23706at4891"/>
<dbReference type="Proteomes" id="UP000001300">
    <property type="component" value="Chromosome E"/>
</dbReference>
<dbReference type="GO" id="GO:0005758">
    <property type="term" value="C:mitochondrial intermembrane space"/>
    <property type="evidence" value="ECO:0000318"/>
    <property type="project" value="GO_Central"/>
</dbReference>
<dbReference type="FunFam" id="1.10.287.1130:FF:000008">
    <property type="entry name" value="Cx9C motif-containing protein 4, mitochondrial"/>
    <property type="match status" value="1"/>
</dbReference>
<dbReference type="Gene3D" id="1.10.287.1130">
    <property type="entry name" value="CytochromE C oxidase copper chaperone"/>
    <property type="match status" value="1"/>
</dbReference>
<dbReference type="InterPro" id="IPR027179">
    <property type="entry name" value="CMC4"/>
</dbReference>
<dbReference type="InterPro" id="IPR009069">
    <property type="entry name" value="Cys_alpha_HP_mot_SF"/>
</dbReference>
<dbReference type="PANTHER" id="PTHR15590">
    <property type="entry name" value="CX9C MOTIF-CONTAINING PROTEIN 4"/>
    <property type="match status" value="1"/>
</dbReference>
<dbReference type="PANTHER" id="PTHR15590:SF0">
    <property type="entry name" value="CX9C MOTIF-CONTAINING PROTEIN 4"/>
    <property type="match status" value="1"/>
</dbReference>
<dbReference type="Pfam" id="PF08991">
    <property type="entry name" value="CMC4"/>
    <property type="match status" value="1"/>
</dbReference>
<dbReference type="SUPFAM" id="SSF47072">
    <property type="entry name" value="Cysteine alpha-hairpin motif"/>
    <property type="match status" value="1"/>
</dbReference>
<dbReference type="PROSITE" id="PS51808">
    <property type="entry name" value="CHCH"/>
    <property type="match status" value="1"/>
</dbReference>
<accession>Q6C4R1</accession>
<evidence type="ECO:0000250" key="1"/>
<evidence type="ECO:0000255" key="2">
    <source>
        <dbReference type="PROSITE-ProRule" id="PRU01150"/>
    </source>
</evidence>
<evidence type="ECO:0000305" key="3"/>
<name>CMC4_YARLI</name>